<gene>
    <name type="primary">Slc6a5</name>
    <name type="synonym">Glyt2</name>
</gene>
<accession>P58295</accession>
<accession>F1LNM6</accession>
<accession>Q6QDB3</accession>
<sequence length="799" mass="87842">MDCSAPKEMNKPPTNILEATVPGHRDSPRAPRTSPEQDLPAAAPAAAVQPPRVPRSASTGAQTFQSADARACEAQRPGVGFCKLSSPQAQATSAALRDLSEGHSAQANPPSGAAGAGNALHCKIPALRGPEEDENVSVGKGTLEHNNTPAVGWVNMSQSTVVLGTDGIASVLPGSVATTTIPEDEQGDENKARGNWSSKLDFILSMVGYAVGLGNVWRFPYLAFQNGGGAFLIPYLMMLALAGLPIFFLEVSLGQFASQGPVSVWKAIPALQGCGIAMLIISVLIAIYYNVIICYTLFYLFASFVSVLPWGSCNNPWNTPECKDKTKLLLDSCVIGDHPKIQIKNSTFCMTAYPNLTMVNFTSQANKTFVSGSEEYFKYFVLKISAGIEYPGEIRWPLAFCLFLAWVIVYASLAKGIKTSGKVVYFTATFPYVVLVILLIRGVTLPGAGAGIWYFITPKWEKLTDATVWKDAATQIFFSLSAAWGGLITLSSYNKFHNNCYRDTLIVTCTNSATSIFAGFVIFSVIGFMANERKVNIENVADQGPGIAFVVYPEALTRLPLSPFWAIIFFLMLLTLGLDTMFATIETIVTSISDEFPKYLRTHKPVFTLGCCICFFIMGFPMITQGGIYMFQLVDTYAASYALVIIAIFELVGISYVYGLQRFCEDIEMMIGFQPNIFWKVCWAFVTPTILTFILCFSFYQWEPMTYGSYRYPNWSMVLGWLMLACSVIWIPIMFVIKMYLAPGRFIERLKLVCSPQPDWGPFLAQHRGERYKNMIDPLGTSSLGLKLPVKDLELGTQC</sequence>
<name>SC6A5_RAT</name>
<reference key="1">
    <citation type="journal article" date="1993" name="J. Biol. Chem.">
        <title>Cloning and expression of a spinal cord- and brain-specific glycine transporter with novel structural features.</title>
        <authorList>
            <person name="Liu Q.-R."/>
            <person name="Lopez-Corcuera B."/>
            <person name="Mandiyan S."/>
            <person name="Nelson H."/>
            <person name="Nelson N."/>
        </authorList>
    </citation>
    <scope>NUCLEOTIDE SEQUENCE [MRNA] (ISOFORM A)</scope>
    <scope>FUNCTION</scope>
    <scope>TRANSPORTER ACTIVITY</scope>
    <scope>BIOPHYSICOCHEMICAL PROPERTIES</scope>
    <scope>TISSUE SPECIFICITY</scope>
    <source>
        <tissue>Brain</tissue>
    </source>
</reference>
<reference key="2">
    <citation type="submission" date="2004-02" db="EMBL/GenBank/DDBJ databases">
        <title>Isoforms of sodium dependent type 2 glycine transporter.</title>
        <authorList>
            <person name="Liu Q.-R."/>
            <person name="Li Q.-F."/>
        </authorList>
    </citation>
    <scope>NUCLEOTIDE SEQUENCE [MRNA] (ISOFORM B)</scope>
    <source>
        <strain>Sprague-Dawley</strain>
    </source>
</reference>
<reference key="3">
    <citation type="journal article" date="2004" name="Nature">
        <title>Genome sequence of the Brown Norway rat yields insights into mammalian evolution.</title>
        <authorList>
            <person name="Gibbs R.A."/>
            <person name="Weinstock G.M."/>
            <person name="Metzker M.L."/>
            <person name="Muzny D.M."/>
            <person name="Sodergren E.J."/>
            <person name="Scherer S."/>
            <person name="Scott G."/>
            <person name="Steffen D."/>
            <person name="Worley K.C."/>
            <person name="Burch P.E."/>
            <person name="Okwuonu G."/>
            <person name="Hines S."/>
            <person name="Lewis L."/>
            <person name="Deramo C."/>
            <person name="Delgado O."/>
            <person name="Dugan-Rocha S."/>
            <person name="Miner G."/>
            <person name="Morgan M."/>
            <person name="Hawes A."/>
            <person name="Gill R."/>
            <person name="Holt R.A."/>
            <person name="Adams M.D."/>
            <person name="Amanatides P.G."/>
            <person name="Baden-Tillson H."/>
            <person name="Barnstead M."/>
            <person name="Chin S."/>
            <person name="Evans C.A."/>
            <person name="Ferriera S."/>
            <person name="Fosler C."/>
            <person name="Glodek A."/>
            <person name="Gu Z."/>
            <person name="Jennings D."/>
            <person name="Kraft C.L."/>
            <person name="Nguyen T."/>
            <person name="Pfannkoch C.M."/>
            <person name="Sitter C."/>
            <person name="Sutton G.G."/>
            <person name="Venter J.C."/>
            <person name="Woodage T."/>
            <person name="Smith D."/>
            <person name="Lee H.-M."/>
            <person name="Gustafson E."/>
            <person name="Cahill P."/>
            <person name="Kana A."/>
            <person name="Doucette-Stamm L."/>
            <person name="Weinstock K."/>
            <person name="Fechtel K."/>
            <person name="Weiss R.B."/>
            <person name="Dunn D.M."/>
            <person name="Green E.D."/>
            <person name="Blakesley R.W."/>
            <person name="Bouffard G.G."/>
            <person name="De Jong P.J."/>
            <person name="Osoegawa K."/>
            <person name="Zhu B."/>
            <person name="Marra M."/>
            <person name="Schein J."/>
            <person name="Bosdet I."/>
            <person name="Fjell C."/>
            <person name="Jones S."/>
            <person name="Krzywinski M."/>
            <person name="Mathewson C."/>
            <person name="Siddiqui A."/>
            <person name="Wye N."/>
            <person name="McPherson J."/>
            <person name="Zhao S."/>
            <person name="Fraser C.M."/>
            <person name="Shetty J."/>
            <person name="Shatsman S."/>
            <person name="Geer K."/>
            <person name="Chen Y."/>
            <person name="Abramzon S."/>
            <person name="Nierman W.C."/>
            <person name="Havlak P.H."/>
            <person name="Chen R."/>
            <person name="Durbin K.J."/>
            <person name="Egan A."/>
            <person name="Ren Y."/>
            <person name="Song X.-Z."/>
            <person name="Li B."/>
            <person name="Liu Y."/>
            <person name="Qin X."/>
            <person name="Cawley S."/>
            <person name="Cooney A.J."/>
            <person name="D'Souza L.M."/>
            <person name="Martin K."/>
            <person name="Wu J.Q."/>
            <person name="Gonzalez-Garay M.L."/>
            <person name="Jackson A.R."/>
            <person name="Kalafus K.J."/>
            <person name="McLeod M.P."/>
            <person name="Milosavljevic A."/>
            <person name="Virk D."/>
            <person name="Volkov A."/>
            <person name="Wheeler D.A."/>
            <person name="Zhang Z."/>
            <person name="Bailey J.A."/>
            <person name="Eichler E.E."/>
            <person name="Tuzun E."/>
            <person name="Birney E."/>
            <person name="Mongin E."/>
            <person name="Ureta-Vidal A."/>
            <person name="Woodwark C."/>
            <person name="Zdobnov E."/>
            <person name="Bork P."/>
            <person name="Suyama M."/>
            <person name="Torrents D."/>
            <person name="Alexandersson M."/>
            <person name="Trask B.J."/>
            <person name="Young J.M."/>
            <person name="Huang H."/>
            <person name="Wang H."/>
            <person name="Xing H."/>
            <person name="Daniels S."/>
            <person name="Gietzen D."/>
            <person name="Schmidt J."/>
            <person name="Stevens K."/>
            <person name="Vitt U."/>
            <person name="Wingrove J."/>
            <person name="Camara F."/>
            <person name="Mar Alba M."/>
            <person name="Abril J.F."/>
            <person name="Guigo R."/>
            <person name="Smit A."/>
            <person name="Dubchak I."/>
            <person name="Rubin E.M."/>
            <person name="Couronne O."/>
            <person name="Poliakov A."/>
            <person name="Huebner N."/>
            <person name="Ganten D."/>
            <person name="Goesele C."/>
            <person name="Hummel O."/>
            <person name="Kreitler T."/>
            <person name="Lee Y.-A."/>
            <person name="Monti J."/>
            <person name="Schulz H."/>
            <person name="Zimdahl H."/>
            <person name="Himmelbauer H."/>
            <person name="Lehrach H."/>
            <person name="Jacob H.J."/>
            <person name="Bromberg S."/>
            <person name="Gullings-Handley J."/>
            <person name="Jensen-Seaman M.I."/>
            <person name="Kwitek A.E."/>
            <person name="Lazar J."/>
            <person name="Pasko D."/>
            <person name="Tonellato P.J."/>
            <person name="Twigger S."/>
            <person name="Ponting C.P."/>
            <person name="Duarte J.M."/>
            <person name="Rice S."/>
            <person name="Goodstadt L."/>
            <person name="Beatson S.A."/>
            <person name="Emes R.D."/>
            <person name="Winter E.E."/>
            <person name="Webber C."/>
            <person name="Brandt P."/>
            <person name="Nyakatura G."/>
            <person name="Adetobi M."/>
            <person name="Chiaromonte F."/>
            <person name="Elnitski L."/>
            <person name="Eswara P."/>
            <person name="Hardison R.C."/>
            <person name="Hou M."/>
            <person name="Kolbe D."/>
            <person name="Makova K."/>
            <person name="Miller W."/>
            <person name="Nekrutenko A."/>
            <person name="Riemer C."/>
            <person name="Schwartz S."/>
            <person name="Taylor J."/>
            <person name="Yang S."/>
            <person name="Zhang Y."/>
            <person name="Lindpaintner K."/>
            <person name="Andrews T.D."/>
            <person name="Caccamo M."/>
            <person name="Clamp M."/>
            <person name="Clarke L."/>
            <person name="Curwen V."/>
            <person name="Durbin R.M."/>
            <person name="Eyras E."/>
            <person name="Searle S.M."/>
            <person name="Cooper G.M."/>
            <person name="Batzoglou S."/>
            <person name="Brudno M."/>
            <person name="Sidow A."/>
            <person name="Stone E.A."/>
            <person name="Payseur B.A."/>
            <person name="Bourque G."/>
            <person name="Lopez-Otin C."/>
            <person name="Puente X.S."/>
            <person name="Chakrabarti K."/>
            <person name="Chatterji S."/>
            <person name="Dewey C."/>
            <person name="Pachter L."/>
            <person name="Bray N."/>
            <person name="Yap V.B."/>
            <person name="Caspi A."/>
            <person name="Tesler G."/>
            <person name="Pevzner P.A."/>
            <person name="Haussler D."/>
            <person name="Roskin K.M."/>
            <person name="Baertsch R."/>
            <person name="Clawson H."/>
            <person name="Furey T.S."/>
            <person name="Hinrichs A.S."/>
            <person name="Karolchik D."/>
            <person name="Kent W.J."/>
            <person name="Rosenbloom K.R."/>
            <person name="Trumbower H."/>
            <person name="Weirauch M."/>
            <person name="Cooper D.N."/>
            <person name="Stenson P.D."/>
            <person name="Ma B."/>
            <person name="Brent M."/>
            <person name="Arumugam M."/>
            <person name="Shteynberg D."/>
            <person name="Copley R.R."/>
            <person name="Taylor M.S."/>
            <person name="Riethman H."/>
            <person name="Mudunuri U."/>
            <person name="Peterson J."/>
            <person name="Guyer M."/>
            <person name="Felsenfeld A."/>
            <person name="Old S."/>
            <person name="Mockrin S."/>
            <person name="Collins F.S."/>
        </authorList>
    </citation>
    <scope>NUCLEOTIDE SEQUENCE [LARGE SCALE GENOMIC DNA]</scope>
    <source>
        <strain>Brown Norway</strain>
    </source>
</reference>
<reference key="4">
    <citation type="journal article" date="2012" name="Nat. Commun.">
        <title>Quantitative maps of protein phosphorylation sites across 14 different rat organs and tissues.</title>
        <authorList>
            <person name="Lundby A."/>
            <person name="Secher A."/>
            <person name="Lage K."/>
            <person name="Nordsborg N.B."/>
            <person name="Dmytriyev A."/>
            <person name="Lundby C."/>
            <person name="Olsen J.V."/>
        </authorList>
    </citation>
    <scope>PHOSPHORYLATION [LARGE SCALE ANALYSIS] AT SER-58</scope>
    <scope>IDENTIFICATION BY MASS SPECTROMETRY [LARGE SCALE ANALYSIS]</scope>
</reference>
<reference key="5">
    <citation type="journal article" date="2015" name="J. Biol. Chem.">
        <title>Molecular basis of the dominant negative effect of a glycine transporter 2 mutation associated with hyperekplexia.</title>
        <authorList>
            <person name="Arribas-Gonzalez E."/>
            <person name="de Juan-Sanz J."/>
            <person name="Aragon C."/>
            <person name="Lopez-Corcuera B."/>
        </authorList>
    </citation>
    <scope>MUTAGENESIS OF SER-512</scope>
    <scope>FUNCTION</scope>
    <scope>SUBCELLULAR LOCATION</scope>
</reference>
<comment type="function">
    <text evidence="6 7">Sodium- and chloride-dependent glycine transporter (PubMed:25480793, PubMed:8226790). Terminates the action of glycine by its high affinity sodium-dependent reuptake into presynaptic terminals (PubMed:8226790). May be responsible for the termination of neurotransmission at strychnine-sensitive glycinergic synapses (PubMed:8226790).</text>
</comment>
<comment type="catalytic activity">
    <reaction evidence="7">
        <text>glycine(out) + chloride(out) + 3 Na(+)(out) = glycine(in) + chloride(in) + 3 Na(+)(in)</text>
        <dbReference type="Rhea" id="RHEA:70695"/>
        <dbReference type="ChEBI" id="CHEBI:17996"/>
        <dbReference type="ChEBI" id="CHEBI:29101"/>
        <dbReference type="ChEBI" id="CHEBI:57305"/>
    </reaction>
</comment>
<comment type="biophysicochemical properties">
    <kinetics>
        <KM evidence="7">17 uM for glycine</KM>
    </kinetics>
</comment>
<comment type="subcellular location">
    <subcellularLocation>
        <location evidence="6">Cell membrane</location>
        <topology evidence="4">Multi-pass membrane protein</topology>
    </subcellularLocation>
</comment>
<comment type="alternative products">
    <event type="alternative splicing"/>
    <isoform>
        <id>P58295-1</id>
        <name>a</name>
        <sequence type="displayed"/>
    </isoform>
    <isoform>
        <id>P58295-2</id>
        <name>b</name>
        <sequence type="described" ref="VSP_011610"/>
    </isoform>
</comment>
<comment type="tissue specificity">
    <text evidence="7">Specifically expressed in spinal cord, brain stem, and to a lesser extent in the cerebellum.</text>
</comment>
<comment type="PTM">
    <text evidence="3">N-glycosylated.</text>
</comment>
<comment type="similarity">
    <text evidence="9">Belongs to the sodium:neurotransmitter symporter (SNF) (TC 2.A.22) family. SLC6A5 subfamily.</text>
</comment>
<organism>
    <name type="scientific">Rattus norvegicus</name>
    <name type="common">Rat</name>
    <dbReference type="NCBI Taxonomy" id="10116"/>
    <lineage>
        <taxon>Eukaryota</taxon>
        <taxon>Metazoa</taxon>
        <taxon>Chordata</taxon>
        <taxon>Craniata</taxon>
        <taxon>Vertebrata</taxon>
        <taxon>Euteleostomi</taxon>
        <taxon>Mammalia</taxon>
        <taxon>Eutheria</taxon>
        <taxon>Euarchontoglires</taxon>
        <taxon>Glires</taxon>
        <taxon>Rodentia</taxon>
        <taxon>Myomorpha</taxon>
        <taxon>Muroidea</taxon>
        <taxon>Muridae</taxon>
        <taxon>Murinae</taxon>
        <taxon>Rattus</taxon>
    </lineage>
</organism>
<dbReference type="EMBL" id="L21672">
    <property type="protein sequence ID" value="AAS19315.1"/>
    <property type="molecule type" value="mRNA"/>
</dbReference>
<dbReference type="EMBL" id="AY547309">
    <property type="protein sequence ID" value="AAS49497.1"/>
    <property type="molecule type" value="mRNA"/>
</dbReference>
<dbReference type="EMBL" id="AC141159">
    <property type="status" value="NOT_ANNOTATED_CDS"/>
    <property type="molecule type" value="Genomic_DNA"/>
</dbReference>
<dbReference type="PIR" id="A48716">
    <property type="entry name" value="A48716"/>
</dbReference>
<dbReference type="RefSeq" id="NP_976079.1">
    <property type="nucleotide sequence ID" value="NM_203334.1"/>
</dbReference>
<dbReference type="RefSeq" id="XP_017444218.1">
    <property type="nucleotide sequence ID" value="XM_017588729.1"/>
</dbReference>
<dbReference type="RefSeq" id="XP_063131140.1">
    <molecule id="P58295-1"/>
    <property type="nucleotide sequence ID" value="XM_063275070.1"/>
</dbReference>
<dbReference type="RefSeq" id="XP_063131194.1">
    <molecule id="P58295-2"/>
    <property type="nucleotide sequence ID" value="XM_063275124.1"/>
</dbReference>
<dbReference type="RefSeq" id="XP_063131210.1">
    <molecule id="P58295-2"/>
    <property type="nucleotide sequence ID" value="XM_063275140.1"/>
</dbReference>
<dbReference type="RefSeq" id="XP_063131230.1">
    <molecule id="P58295-2"/>
    <property type="nucleotide sequence ID" value="XM_063275160.1"/>
</dbReference>
<dbReference type="RefSeq" id="XP_063131281.1">
    <molecule id="P58295-2"/>
    <property type="nucleotide sequence ID" value="XM_063275211.1"/>
</dbReference>
<dbReference type="SMR" id="P58295"/>
<dbReference type="FunCoup" id="P58295">
    <property type="interactions" value="20"/>
</dbReference>
<dbReference type="STRING" id="10116.ENSRNOP00000043665"/>
<dbReference type="BindingDB" id="P58295"/>
<dbReference type="ChEMBL" id="CHEMBL3195"/>
<dbReference type="GlyCosmos" id="P58295">
    <property type="glycosylation" value="4 sites, No reported glycans"/>
</dbReference>
<dbReference type="GlyGen" id="P58295">
    <property type="glycosylation" value="5 sites"/>
</dbReference>
<dbReference type="iPTMnet" id="P58295"/>
<dbReference type="PhosphoSitePlus" id="P58295"/>
<dbReference type="PaxDb" id="10116-ENSRNOP00000043665"/>
<dbReference type="Ensembl" id="ENSRNOT00000041950.5">
    <molecule id="P58295-1"/>
    <property type="protein sequence ID" value="ENSRNOP00000043665.4"/>
    <property type="gene ID" value="ENSRNOG00000031662.5"/>
</dbReference>
<dbReference type="GeneID" id="171148"/>
<dbReference type="KEGG" id="rno:171148"/>
<dbReference type="UCSC" id="RGD:621824">
    <molecule id="P58295-1"/>
    <property type="organism name" value="rat"/>
</dbReference>
<dbReference type="AGR" id="RGD:621824"/>
<dbReference type="CTD" id="9152"/>
<dbReference type="RGD" id="621824">
    <property type="gene designation" value="Slc6a5"/>
</dbReference>
<dbReference type="eggNOG" id="KOG3660">
    <property type="taxonomic scope" value="Eukaryota"/>
</dbReference>
<dbReference type="GeneTree" id="ENSGT00940000154963"/>
<dbReference type="InParanoid" id="P58295"/>
<dbReference type="OMA" id="GAPKEMN"/>
<dbReference type="OrthoDB" id="6581954at2759"/>
<dbReference type="TreeFam" id="TF343812"/>
<dbReference type="Reactome" id="R-RNO-442660">
    <property type="pathway name" value="Na+/Cl- dependent neurotransmitter transporters"/>
</dbReference>
<dbReference type="PRO" id="PR:P58295"/>
<dbReference type="Proteomes" id="UP000002494">
    <property type="component" value="Chromosome 1"/>
</dbReference>
<dbReference type="Bgee" id="ENSRNOG00000031662">
    <property type="expression patterns" value="Expressed in cerebellum and 6 other cell types or tissues"/>
</dbReference>
<dbReference type="GO" id="GO:0031045">
    <property type="term" value="C:dense core granule"/>
    <property type="evidence" value="ECO:0000314"/>
    <property type="project" value="ARUK-UCL"/>
</dbReference>
<dbReference type="GO" id="GO:0005768">
    <property type="term" value="C:endosome"/>
    <property type="evidence" value="ECO:0000314"/>
    <property type="project" value="ARUK-UCL"/>
</dbReference>
<dbReference type="GO" id="GO:0098690">
    <property type="term" value="C:glycinergic synapse"/>
    <property type="evidence" value="ECO:0000314"/>
    <property type="project" value="SynGO"/>
</dbReference>
<dbReference type="GO" id="GO:0005886">
    <property type="term" value="C:plasma membrane"/>
    <property type="evidence" value="ECO:0000250"/>
    <property type="project" value="UniProtKB"/>
</dbReference>
<dbReference type="GO" id="GO:0042734">
    <property type="term" value="C:presynaptic membrane"/>
    <property type="evidence" value="ECO:0000314"/>
    <property type="project" value="SynGO"/>
</dbReference>
<dbReference type="GO" id="GO:0015187">
    <property type="term" value="F:glycine transmembrane transporter activity"/>
    <property type="evidence" value="ECO:0000314"/>
    <property type="project" value="RGD"/>
</dbReference>
<dbReference type="GO" id="GO:0015375">
    <property type="term" value="F:glycine:sodium symporter activity"/>
    <property type="evidence" value="ECO:0000314"/>
    <property type="project" value="UniProtKB"/>
</dbReference>
<dbReference type="GO" id="GO:0046872">
    <property type="term" value="F:metal ion binding"/>
    <property type="evidence" value="ECO:0007669"/>
    <property type="project" value="UniProtKB-KW"/>
</dbReference>
<dbReference type="GO" id="GO:1903804">
    <property type="term" value="P:glycine import across plasma membrane"/>
    <property type="evidence" value="ECO:0000266"/>
    <property type="project" value="RGD"/>
</dbReference>
<dbReference type="GO" id="GO:0015816">
    <property type="term" value="P:glycine transport"/>
    <property type="evidence" value="ECO:0000314"/>
    <property type="project" value="RGD"/>
</dbReference>
<dbReference type="GO" id="GO:0098810">
    <property type="term" value="P:neurotransmitter reuptake"/>
    <property type="evidence" value="ECO:0000266"/>
    <property type="project" value="RGD"/>
</dbReference>
<dbReference type="GO" id="GO:0001504">
    <property type="term" value="P:neurotransmitter uptake"/>
    <property type="evidence" value="ECO:0000266"/>
    <property type="project" value="RGD"/>
</dbReference>
<dbReference type="GO" id="GO:0035725">
    <property type="term" value="P:sodium ion transmembrane transport"/>
    <property type="evidence" value="ECO:0000318"/>
    <property type="project" value="GO_Central"/>
</dbReference>
<dbReference type="GO" id="GO:0060012">
    <property type="term" value="P:synaptic transmission, glycinergic"/>
    <property type="evidence" value="ECO:0000266"/>
    <property type="project" value="RGD"/>
</dbReference>
<dbReference type="CDD" id="cd11499">
    <property type="entry name" value="SLC6sbd_GlyT2"/>
    <property type="match status" value="1"/>
</dbReference>
<dbReference type="InterPro" id="IPR000175">
    <property type="entry name" value="Na/ntran_symport"/>
</dbReference>
<dbReference type="InterPro" id="IPR037272">
    <property type="entry name" value="SNS_sf"/>
</dbReference>
<dbReference type="PANTHER" id="PTHR11616:SF241">
    <property type="entry name" value="SODIUM- AND CHLORIDE-DEPENDENT GLYCINE TRANSPORTER 2"/>
    <property type="match status" value="1"/>
</dbReference>
<dbReference type="PANTHER" id="PTHR11616">
    <property type="entry name" value="SODIUM/CHLORIDE DEPENDENT TRANSPORTER"/>
    <property type="match status" value="1"/>
</dbReference>
<dbReference type="Pfam" id="PF00209">
    <property type="entry name" value="SNF"/>
    <property type="match status" value="1"/>
</dbReference>
<dbReference type="PRINTS" id="PR00176">
    <property type="entry name" value="NANEUSMPORT"/>
</dbReference>
<dbReference type="SUPFAM" id="SSF161070">
    <property type="entry name" value="SNF-like"/>
    <property type="match status" value="1"/>
</dbReference>
<dbReference type="PROSITE" id="PS00610">
    <property type="entry name" value="NA_NEUROTRAN_SYMP_1"/>
    <property type="match status" value="1"/>
</dbReference>
<dbReference type="PROSITE" id="PS00754">
    <property type="entry name" value="NA_NEUROTRAN_SYMP_2"/>
    <property type="match status" value="1"/>
</dbReference>
<dbReference type="PROSITE" id="PS50267">
    <property type="entry name" value="NA_NEUROTRAN_SYMP_3"/>
    <property type="match status" value="1"/>
</dbReference>
<feature type="chain" id="PRO_0000214764" description="Sodium- and chloride-dependent glycine transporter 2">
    <location>
        <begin position="1"/>
        <end position="799"/>
    </location>
</feature>
<feature type="topological domain" description="Cytoplasmic" evidence="4">
    <location>
        <begin position="1"/>
        <end position="201"/>
    </location>
</feature>
<feature type="transmembrane region" description="Helical; Name=1" evidence="4">
    <location>
        <begin position="202"/>
        <end position="222"/>
    </location>
</feature>
<feature type="transmembrane region" description="Helical; Name=2" evidence="4">
    <location>
        <begin position="230"/>
        <end position="249"/>
    </location>
</feature>
<feature type="transmembrane region" description="Helical; Name=3" evidence="4">
    <location>
        <begin position="273"/>
        <end position="293"/>
    </location>
</feature>
<feature type="topological domain" description="Extracellular" evidence="4">
    <location>
        <begin position="294"/>
        <end position="395"/>
    </location>
</feature>
<feature type="transmembrane region" description="Helical; Name=4" evidence="4">
    <location>
        <begin position="396"/>
        <end position="414"/>
    </location>
</feature>
<feature type="transmembrane region" description="Helical; Name=5" evidence="4">
    <location>
        <begin position="423"/>
        <end position="440"/>
    </location>
</feature>
<feature type="transmembrane region" description="Helical; Name=6" evidence="4">
    <location>
        <begin position="476"/>
        <end position="493"/>
    </location>
</feature>
<feature type="transmembrane region" description="Helical; Name=7" evidence="4">
    <location>
        <begin position="505"/>
        <end position="526"/>
    </location>
</feature>
<feature type="transmembrane region" description="Helical; Name=8" evidence="4">
    <location>
        <begin position="559"/>
        <end position="578"/>
    </location>
</feature>
<feature type="transmembrane region" description="Helical; Name=9" evidence="4">
    <location>
        <begin position="606"/>
        <end position="624"/>
    </location>
</feature>
<feature type="transmembrane region" description="Helical; Name=10" evidence="4">
    <location>
        <begin position="640"/>
        <end position="660"/>
    </location>
</feature>
<feature type="transmembrane region" description="Helical; Name=11" evidence="4">
    <location>
        <begin position="681"/>
        <end position="700"/>
    </location>
</feature>
<feature type="transmembrane region" description="Helical; Name=12" evidence="4">
    <location>
        <begin position="719"/>
        <end position="737"/>
    </location>
</feature>
<feature type="topological domain" description="Cytoplasmic" evidence="4">
    <location>
        <begin position="738"/>
        <end position="799"/>
    </location>
</feature>
<feature type="region of interest" description="Disordered" evidence="5">
    <location>
        <begin position="1"/>
        <end position="64"/>
    </location>
</feature>
<feature type="compositionally biased region" description="Low complexity" evidence="5">
    <location>
        <begin position="40"/>
        <end position="57"/>
    </location>
</feature>
<feature type="binding site" evidence="2">
    <location>
        <position position="208"/>
    </location>
    <ligand>
        <name>Na(+)</name>
        <dbReference type="ChEBI" id="CHEBI:29101"/>
        <label>1</label>
    </ligand>
</feature>
<feature type="binding site" evidence="2">
    <location>
        <position position="210"/>
    </location>
    <ligand>
        <name>Na(+)</name>
        <dbReference type="ChEBI" id="CHEBI:29101"/>
        <label>2</label>
    </ligand>
</feature>
<feature type="binding site" evidence="2">
    <location>
        <position position="211"/>
    </location>
    <ligand>
        <name>Na(+)</name>
        <dbReference type="ChEBI" id="CHEBI:29101"/>
        <label>1</label>
    </ligand>
</feature>
<feature type="binding site" evidence="2">
    <location>
        <position position="215"/>
    </location>
    <ligand>
        <name>Na(+)</name>
        <dbReference type="ChEBI" id="CHEBI:29101"/>
        <label>2</label>
    </ligand>
</feature>
<feature type="binding site" evidence="2">
    <location>
        <position position="479"/>
    </location>
    <ligand>
        <name>Na(+)</name>
        <dbReference type="ChEBI" id="CHEBI:29101"/>
        <label>2</label>
    </ligand>
</feature>
<feature type="binding site" evidence="2">
    <location>
        <position position="511"/>
    </location>
    <ligand>
        <name>Na(+)</name>
        <dbReference type="ChEBI" id="CHEBI:29101"/>
        <label>2</label>
    </ligand>
</feature>
<feature type="binding site" evidence="2">
    <location>
        <position position="576"/>
    </location>
    <ligand>
        <name>Na(+)</name>
        <dbReference type="ChEBI" id="CHEBI:29101"/>
        <label>1</label>
    </ligand>
</feature>
<feature type="binding site" evidence="2">
    <location>
        <position position="579"/>
    </location>
    <ligand>
        <name>Na(+)</name>
        <dbReference type="ChEBI" id="CHEBI:29101"/>
        <label>1</label>
    </ligand>
</feature>
<feature type="modified residue" description="Phosphoserine" evidence="10">
    <location>
        <position position="58"/>
    </location>
</feature>
<feature type="modified residue" description="Phosphothreonine" evidence="1">
    <location>
        <position position="59"/>
    </location>
</feature>
<feature type="modified residue" description="Phosphoserine" evidence="1">
    <location>
        <position position="86"/>
    </location>
</feature>
<feature type="glycosylation site" description="N-linked (GlcNAc...) asparagine" evidence="4">
    <location>
        <position position="345"/>
    </location>
</feature>
<feature type="glycosylation site" description="N-linked (GlcNAc...) asparagine" evidence="4">
    <location>
        <position position="355"/>
    </location>
</feature>
<feature type="glycosylation site" description="N-linked (GlcNAc...) asparagine" evidence="4">
    <location>
        <position position="360"/>
    </location>
</feature>
<feature type="glycosylation site" description="N-linked (GlcNAc...) asparagine" evidence="4">
    <location>
        <position position="366"/>
    </location>
</feature>
<feature type="disulfide bond" evidence="2">
    <location>
        <begin position="313"/>
        <end position="322"/>
    </location>
</feature>
<feature type="splice variant" id="VSP_011610" description="In isoform b." evidence="8">
    <location>
        <begin position="1"/>
        <end position="8"/>
    </location>
</feature>
<feature type="mutagenesis site" description="Decreased glycine transport." evidence="6">
    <original>S</original>
    <variation>A</variation>
    <location>
        <position position="512"/>
    </location>
</feature>
<feature type="mutagenesis site" description="Decreased glycine transport." evidence="6">
    <original>S</original>
    <variation>C</variation>
    <location>
        <position position="512"/>
    </location>
</feature>
<feature type="mutagenesis site" description="Loss of glycine transport. Retained in the endoplasmic reticulum due to defective processing and trafficking to the cell surface." evidence="6">
    <original>S</original>
    <variation>R</variation>
    <location>
        <position position="512"/>
    </location>
</feature>
<feature type="mutagenesis site" description="No effect on glycine transport." evidence="6">
    <original>S</original>
    <variation>T</variation>
    <location>
        <position position="512"/>
    </location>
</feature>
<feature type="sequence conflict" description="In Ref. 1; AAS19315 and 2; AAS49497." evidence="9" ref="1 2">
    <original>G</original>
    <variation>A</variation>
    <location>
        <position position="139"/>
    </location>
</feature>
<feature type="sequence conflict" description="In Ref. 1; AAS19315 and 2; AAS49497." evidence="9" ref="1 2">
    <original>A</original>
    <variation>P</variation>
    <location>
        <position position="150"/>
    </location>
</feature>
<feature type="sequence conflict" description="In Ref. 1; AAS19315 and 2; AAS49497." evidence="9" ref="1 2">
    <original>A</original>
    <variation>P</variation>
    <location>
        <position position="399"/>
    </location>
</feature>
<proteinExistence type="evidence at protein level"/>
<protein>
    <recommendedName>
        <fullName>Sodium- and chloride-dependent glycine transporter 2</fullName>
        <shortName>GlyT-2</shortName>
        <shortName>GlyT2</shortName>
    </recommendedName>
    <alternativeName>
        <fullName>Solute carrier family 6 member 5</fullName>
    </alternativeName>
</protein>
<evidence type="ECO:0000250" key="1">
    <source>
        <dbReference type="UniProtKB" id="Q761V0"/>
    </source>
</evidence>
<evidence type="ECO:0000250" key="2">
    <source>
        <dbReference type="UniProtKB" id="Q7K4Y6"/>
    </source>
</evidence>
<evidence type="ECO:0000250" key="3">
    <source>
        <dbReference type="UniProtKB" id="Q9Y345"/>
    </source>
</evidence>
<evidence type="ECO:0000255" key="4"/>
<evidence type="ECO:0000256" key="5">
    <source>
        <dbReference type="SAM" id="MobiDB-lite"/>
    </source>
</evidence>
<evidence type="ECO:0000269" key="6">
    <source>
    </source>
</evidence>
<evidence type="ECO:0000269" key="7">
    <source>
    </source>
</evidence>
<evidence type="ECO:0000303" key="8">
    <source ref="2"/>
</evidence>
<evidence type="ECO:0000305" key="9"/>
<evidence type="ECO:0007744" key="10">
    <source>
    </source>
</evidence>
<keyword id="KW-0025">Alternative splicing</keyword>
<keyword id="KW-1003">Cell membrane</keyword>
<keyword id="KW-1015">Disulfide bond</keyword>
<keyword id="KW-0325">Glycoprotein</keyword>
<keyword id="KW-0472">Membrane</keyword>
<keyword id="KW-0479">Metal-binding</keyword>
<keyword id="KW-0532">Neurotransmitter transport</keyword>
<keyword id="KW-0597">Phosphoprotein</keyword>
<keyword id="KW-1185">Reference proteome</keyword>
<keyword id="KW-0915">Sodium</keyword>
<keyword id="KW-0769">Symport</keyword>
<keyword id="KW-0812">Transmembrane</keyword>
<keyword id="KW-1133">Transmembrane helix</keyword>
<keyword id="KW-0813">Transport</keyword>